<organism>
    <name type="scientific">Salmonella schwarzengrund (strain CVM19633)</name>
    <dbReference type="NCBI Taxonomy" id="439843"/>
    <lineage>
        <taxon>Bacteria</taxon>
        <taxon>Pseudomonadati</taxon>
        <taxon>Pseudomonadota</taxon>
        <taxon>Gammaproteobacteria</taxon>
        <taxon>Enterobacterales</taxon>
        <taxon>Enterobacteriaceae</taxon>
        <taxon>Salmonella</taxon>
    </lineage>
</organism>
<reference key="1">
    <citation type="journal article" date="2011" name="J. Bacteriol.">
        <title>Comparative genomics of 28 Salmonella enterica isolates: evidence for CRISPR-mediated adaptive sublineage evolution.</title>
        <authorList>
            <person name="Fricke W.F."/>
            <person name="Mammel M.K."/>
            <person name="McDermott P.F."/>
            <person name="Tartera C."/>
            <person name="White D.G."/>
            <person name="Leclerc J.E."/>
            <person name="Ravel J."/>
            <person name="Cebula T.A."/>
        </authorList>
    </citation>
    <scope>NUCLEOTIDE SEQUENCE [LARGE SCALE GENOMIC DNA]</scope>
    <source>
        <strain>CVM19633</strain>
    </source>
</reference>
<keyword id="KW-0275">Fatty acid biosynthesis</keyword>
<keyword id="KW-0276">Fatty acid metabolism</keyword>
<keyword id="KW-0378">Hydrolase</keyword>
<keyword id="KW-0444">Lipid biosynthesis</keyword>
<keyword id="KW-0443">Lipid metabolism</keyword>
<protein>
    <recommendedName>
        <fullName evidence="1">Acyl carrier protein phosphodiesterase</fullName>
        <shortName evidence="1">ACP phosphodiesterase</shortName>
        <ecNumber evidence="1">3.1.4.14</ecNumber>
    </recommendedName>
</protein>
<sequence>MNFLAHLHLAHLADSSLSGNLLADFVRGNPATHYPPDVVEGIYMHRRIDVMTDNLPEVREAREWFRHETRRVAPITLDVMWDHFLSRHWTQISPDFPLQAFVGYAHAQVATILPDSPPRFVNLNDYLWSEKWLERYRDMDFIQNVLNGMANRRPRLDALRDSWYDLDAHYDALEERFWHFYPRMMAQAARKAL</sequence>
<gene>
    <name evidence="1" type="primary">acpH</name>
    <name type="ordered locus">SeSA_A0461</name>
</gene>
<proteinExistence type="inferred from homology"/>
<comment type="function">
    <text evidence="1">Converts holo-ACP to apo-ACP by hydrolytic cleavage of the phosphopantetheine prosthetic group from ACP.</text>
</comment>
<comment type="catalytic activity">
    <reaction evidence="1">
        <text>holo-[ACP] + H2O = apo-[ACP] + (R)-4'-phosphopantetheine + H(+)</text>
        <dbReference type="Rhea" id="RHEA:20537"/>
        <dbReference type="Rhea" id="RHEA-COMP:9685"/>
        <dbReference type="Rhea" id="RHEA-COMP:9690"/>
        <dbReference type="ChEBI" id="CHEBI:15377"/>
        <dbReference type="ChEBI" id="CHEBI:15378"/>
        <dbReference type="ChEBI" id="CHEBI:29999"/>
        <dbReference type="ChEBI" id="CHEBI:61723"/>
        <dbReference type="ChEBI" id="CHEBI:64479"/>
        <dbReference type="EC" id="3.1.4.14"/>
    </reaction>
</comment>
<comment type="similarity">
    <text evidence="1">Belongs to the AcpH family.</text>
</comment>
<dbReference type="EC" id="3.1.4.14" evidence="1"/>
<dbReference type="EMBL" id="CP001127">
    <property type="protein sequence ID" value="ACF93105.1"/>
    <property type="molecule type" value="Genomic_DNA"/>
</dbReference>
<dbReference type="RefSeq" id="WP_001009858.1">
    <property type="nucleotide sequence ID" value="NC_011094.1"/>
</dbReference>
<dbReference type="SMR" id="B4TZH7"/>
<dbReference type="KEGG" id="sew:SeSA_A0461"/>
<dbReference type="HOGENOM" id="CLU_099370_1_0_6"/>
<dbReference type="Proteomes" id="UP000001865">
    <property type="component" value="Chromosome"/>
</dbReference>
<dbReference type="GO" id="GO:0008770">
    <property type="term" value="F:[acyl-carrier-protein] phosphodiesterase activity"/>
    <property type="evidence" value="ECO:0007669"/>
    <property type="project" value="UniProtKB-UniRule"/>
</dbReference>
<dbReference type="GO" id="GO:0006633">
    <property type="term" value="P:fatty acid biosynthetic process"/>
    <property type="evidence" value="ECO:0007669"/>
    <property type="project" value="UniProtKB-UniRule"/>
</dbReference>
<dbReference type="HAMAP" id="MF_01950">
    <property type="entry name" value="AcpH"/>
    <property type="match status" value="1"/>
</dbReference>
<dbReference type="InterPro" id="IPR007431">
    <property type="entry name" value="ACP_PD"/>
</dbReference>
<dbReference type="InterPro" id="IPR023491">
    <property type="entry name" value="ACP_phosphodiesterase_gpbac"/>
</dbReference>
<dbReference type="NCBIfam" id="NF007466">
    <property type="entry name" value="PRK10045.1"/>
    <property type="match status" value="1"/>
</dbReference>
<dbReference type="PANTHER" id="PTHR38764">
    <property type="entry name" value="ACYL CARRIER PROTEIN PHOSPHODIESTERASE"/>
    <property type="match status" value="1"/>
</dbReference>
<dbReference type="PANTHER" id="PTHR38764:SF1">
    <property type="entry name" value="ACYL CARRIER PROTEIN PHOSPHODIESTERASE"/>
    <property type="match status" value="1"/>
</dbReference>
<dbReference type="Pfam" id="PF04336">
    <property type="entry name" value="ACP_PD"/>
    <property type="match status" value="1"/>
</dbReference>
<dbReference type="PIRSF" id="PIRSF011489">
    <property type="entry name" value="DUF479"/>
    <property type="match status" value="1"/>
</dbReference>
<accession>B4TZH7</accession>
<name>ACPH_SALSV</name>
<feature type="chain" id="PRO_1000188818" description="Acyl carrier protein phosphodiesterase">
    <location>
        <begin position="1"/>
        <end position="193"/>
    </location>
</feature>
<evidence type="ECO:0000255" key="1">
    <source>
        <dbReference type="HAMAP-Rule" id="MF_01950"/>
    </source>
</evidence>